<sequence length="143" mass="15270">MKFLIVLAVAVACASADVSHIAKSDEYAAPVVKSSYDITPEGHFQFNYETGNGIYAQAEGAVKNVNSEYPAIEVKGAYKYTSPDGQPIDLAYVADENGYQPQGSHLPTPHPIPEAIARALAYIEAHPPSPSVVERKVVANLLG</sequence>
<keyword id="KW-0193">Cuticle</keyword>
<keyword id="KW-1185">Reference proteome</keyword>
<keyword id="KW-0732">Signal</keyword>
<feature type="signal peptide" evidence="1">
    <location>
        <begin position="1"/>
        <end position="16"/>
    </location>
</feature>
<feature type="chain" id="PRO_0000006404" description="Larval cuticle protein LCP-17">
    <location>
        <begin position="17"/>
        <end position="143"/>
    </location>
</feature>
<feature type="domain" description="Chitin-binding type R&amp;R" evidence="2">
    <location>
        <begin position="41"/>
        <end position="110"/>
    </location>
</feature>
<reference key="1">
    <citation type="journal article" date="1997" name="Insect Biochem. Mol. Biol.">
        <title>Purification and cDNA cloning of evolutionally conserved larval cuticle proteins of the silkworm, Bombyx mori.</title>
        <authorList>
            <person name="Nakato H."/>
            <person name="Takekoshi M."/>
            <person name="Togawa T."/>
            <person name="Izumi S."/>
            <person name="Tomino S."/>
        </authorList>
    </citation>
    <scope>NUCLEOTIDE SEQUENCE [MRNA]</scope>
    <source>
        <strain>Kinshu X Showa</strain>
        <tissue>Epidermis</tissue>
    </source>
</reference>
<accession>O02387</accession>
<evidence type="ECO:0000255" key="1"/>
<evidence type="ECO:0000255" key="2">
    <source>
        <dbReference type="PROSITE-ProRule" id="PRU00497"/>
    </source>
</evidence>
<organism>
    <name type="scientific">Bombyx mori</name>
    <name type="common">Silk moth</name>
    <dbReference type="NCBI Taxonomy" id="7091"/>
    <lineage>
        <taxon>Eukaryota</taxon>
        <taxon>Metazoa</taxon>
        <taxon>Ecdysozoa</taxon>
        <taxon>Arthropoda</taxon>
        <taxon>Hexapoda</taxon>
        <taxon>Insecta</taxon>
        <taxon>Pterygota</taxon>
        <taxon>Neoptera</taxon>
        <taxon>Endopterygota</taxon>
        <taxon>Lepidoptera</taxon>
        <taxon>Glossata</taxon>
        <taxon>Ditrysia</taxon>
        <taxon>Bombycoidea</taxon>
        <taxon>Bombycidae</taxon>
        <taxon>Bombycinae</taxon>
        <taxon>Bombyx</taxon>
    </lineage>
</organism>
<gene>
    <name type="primary">LCP17</name>
</gene>
<protein>
    <recommendedName>
        <fullName>Larval cuticle protein LCP-17</fullName>
    </recommendedName>
</protein>
<dbReference type="EMBL" id="AB004766">
    <property type="protein sequence ID" value="BAA20474.1"/>
    <property type="molecule type" value="mRNA"/>
</dbReference>
<dbReference type="RefSeq" id="NP_001036827.1">
    <property type="nucleotide sequence ID" value="NM_001043362.1"/>
</dbReference>
<dbReference type="STRING" id="7091.O02387"/>
<dbReference type="PaxDb" id="7091-BGIBMGA005277-TA"/>
<dbReference type="EnsemblMetazoa" id="NM_001043362.1">
    <property type="protein sequence ID" value="NP_001036827.1"/>
    <property type="gene ID" value="GeneID_692362"/>
</dbReference>
<dbReference type="GeneID" id="692362"/>
<dbReference type="KEGG" id="bmor:692362"/>
<dbReference type="CTD" id="692362"/>
<dbReference type="eggNOG" id="ENOG502T6PB">
    <property type="taxonomic scope" value="Eukaryota"/>
</dbReference>
<dbReference type="HOGENOM" id="CLU_065450_3_0_1"/>
<dbReference type="InParanoid" id="O02387"/>
<dbReference type="OrthoDB" id="470905at7088"/>
<dbReference type="Proteomes" id="UP000005204">
    <property type="component" value="Unassembled WGS sequence"/>
</dbReference>
<dbReference type="GO" id="GO:0062129">
    <property type="term" value="C:chitin-based extracellular matrix"/>
    <property type="evidence" value="ECO:0007669"/>
    <property type="project" value="TreeGrafter"/>
</dbReference>
<dbReference type="GO" id="GO:0008010">
    <property type="term" value="F:structural constituent of chitin-based larval cuticle"/>
    <property type="evidence" value="ECO:0007669"/>
    <property type="project" value="TreeGrafter"/>
</dbReference>
<dbReference type="InterPro" id="IPR031311">
    <property type="entry name" value="CHIT_BIND_RR_consensus"/>
</dbReference>
<dbReference type="InterPro" id="IPR050468">
    <property type="entry name" value="Cuticle_Struct_Prot"/>
</dbReference>
<dbReference type="InterPro" id="IPR000618">
    <property type="entry name" value="Insect_cuticle"/>
</dbReference>
<dbReference type="PANTHER" id="PTHR10380">
    <property type="entry name" value="CUTICLE PROTEIN"/>
    <property type="match status" value="1"/>
</dbReference>
<dbReference type="PANTHER" id="PTHR10380:SF238">
    <property type="entry name" value="CUTICULAR PROTEIN 65EA-RELATED"/>
    <property type="match status" value="1"/>
</dbReference>
<dbReference type="Pfam" id="PF00379">
    <property type="entry name" value="Chitin_bind_4"/>
    <property type="match status" value="1"/>
</dbReference>
<dbReference type="PRINTS" id="PR00947">
    <property type="entry name" value="CUTICLE"/>
</dbReference>
<dbReference type="PROSITE" id="PS00233">
    <property type="entry name" value="CHIT_BIND_RR_1"/>
    <property type="match status" value="1"/>
</dbReference>
<dbReference type="PROSITE" id="PS51155">
    <property type="entry name" value="CHIT_BIND_RR_2"/>
    <property type="match status" value="1"/>
</dbReference>
<proteinExistence type="evidence at transcript level"/>
<name>CU17_BOMMO</name>
<comment type="function">
    <text>Component of the cuticle of the larva of Bombyx mori.</text>
</comment>